<gene>
    <name evidence="1" type="primary">L2</name>
</gene>
<evidence type="ECO:0000255" key="1">
    <source>
        <dbReference type="HAMAP-Rule" id="MF_04003"/>
    </source>
</evidence>
<feature type="chain" id="PRO_0000133632" description="Minor capsid protein L2">
    <location>
        <begin position="1"/>
        <end position="467"/>
    </location>
</feature>
<feature type="short sequence motif" description="Nuclear localization signal" evidence="1">
    <location>
        <begin position="1"/>
        <end position="12"/>
    </location>
</feature>
<feature type="short sequence motif" description="Nuclear localization signal" evidence="1">
    <location>
        <begin position="447"/>
        <end position="456"/>
    </location>
</feature>
<feature type="disulfide bond" evidence="1">
    <location>
        <begin position="21"/>
        <end position="27"/>
    </location>
</feature>
<comment type="function">
    <text evidence="1">Minor protein of the capsid that localizes along the inner surface of the virion, within the central cavities beneath the L1 pentamers. Plays a role in capsid stabilization through interaction with the major capsid protein L1. Once the virion enters the host cell, L2 escorts the genomic DNA into the nucleus by promoting escape from the endosomal compartments and traffic through the host Golgi network. Mechanistically, the C-terminus of L2 possesses a cell-penetrating peptide that protudes from the host endosome, interacts with host cytoplasmic retromer cargo and thereby mediates the capsid delivery to the host trans-Golgi network. Plays a role through its interaction with host dynein in the intracellular microtubule-dependent transport of viral capsid toward the nucleus. Mediates the viral genome import into the nucleus through binding to host importins. Once within the nucleus, L2 localizes viral genomes to host PML bodies in order to activate early gene expression for establishment of infection. Later on, promotes late gene expression by interacting with the viral E2 protein and by inhibiting its transcriptional activation functions. During virion assembly, encapsidates the genome by direct interaction with the viral DNA.</text>
</comment>
<comment type="subunit">
    <text evidence="1">Interacts with major capsid protein L1. Interacts with E2; this interaction inhibits E2 transcriptional activity but not the DNA replication function E2. Interacts with host GADD45GIP1. Interacts with host HSPA8; this interaction is required for L2 nuclear translocation. Interacts with host importins KPNB2 and KPNB3. Forms a complex with importin alpha2-beta1 heterodimers via interaction with the importin alpha2 adapter. Interacts with host DYNLT1; this interaction is essential for virus intracellular transport during entry. Interacts (via C-terminus) with host retromer subunits VPS35 and VPS29.</text>
</comment>
<comment type="subcellular location">
    <subcellularLocation>
        <location evidence="1">Virion</location>
    </subcellularLocation>
    <subcellularLocation>
        <location evidence="1">Host nucleus</location>
    </subcellularLocation>
    <subcellularLocation>
        <location evidence="1">Host early endosome</location>
    </subcellularLocation>
    <subcellularLocation>
        <location evidence="1">Host Golgi apparatus</location>
    </subcellularLocation>
</comment>
<comment type="PTM">
    <text evidence="1">Highly phosphorylated.</text>
</comment>
<comment type="similarity">
    <text evidence="1">Belongs to the papillomaviridae L2 protein family.</text>
</comment>
<accession>Q9JH45</accession>
<protein>
    <recommendedName>
        <fullName evidence="1">Minor capsid protein L2</fullName>
    </recommendedName>
</protein>
<proteinExistence type="inferred from homology"/>
<reference key="1">
    <citation type="journal article" date="2000" name="Clin. Diagn. Lab. Immunol.">
        <title>Molecular cloning and nucleotide sequence analysis of a novel human papillomavirus (type 82) associated with vaginal intraepithelial neoplasia.</title>
        <authorList>
            <person name="Kino N."/>
            <person name="Sata T."/>
            <person name="Sato Y."/>
            <person name="Sugase M."/>
            <person name="Matsukura T."/>
        </authorList>
    </citation>
    <scope>NUCLEOTIDE SEQUENCE [GENOMIC DNA]</scope>
</reference>
<sequence>MVAVRASRRKRASATDLYKTCKAAGTCPPDVIPKIEGSTLADKILQWSGLGIFLGGLGIGTGTGTGGRTGYIPLGGGGRPSVVDIGPTRPPIIIEPVGPTEPSIVTLVEESSIIQSGSPFPNFSGGDGFEVTTSSTTTPAVLDITPSPGTVHVTSTNIQNPLYIEPPVDIPQSGEALGHIFTSTSTAGTHSYEEIPMEVFASNTSSGSKPISSTPIPGIRRVAAPRLYSKAYQQVKVTDPNFISKPSTFITFDNPAYEPMDTTLTFSADSHVAPDPDFLDIIALHRPALTSRRGTVRFSRLGQKATLKTRSGKQIGAKVHYYHDISPIHATEEAIELQPLITSEQHSTPLFDVYADADPAPTFTFPSTTPTTIPRFSSTIFSTTSSAPLNVTIPLSTSFDIPIYNGPDIYAPVPSSTWPYIPPPPTTMSHSVVAQGGNYYLWPYIYLIHKRRRKRVPCFFSDGLAAY</sequence>
<organism>
    <name type="scientific">Human papillomavirus 69</name>
    <dbReference type="NCBI Taxonomy" id="37121"/>
    <lineage>
        <taxon>Viruses</taxon>
        <taxon>Monodnaviria</taxon>
        <taxon>Shotokuvirae</taxon>
        <taxon>Cossaviricota</taxon>
        <taxon>Papovaviricetes</taxon>
        <taxon>Zurhausenvirales</taxon>
        <taxon>Papillomaviridae</taxon>
        <taxon>Firstpapillomavirinae</taxon>
        <taxon>Alphapapillomavirus</taxon>
        <taxon>Alphapapillomavirus 5</taxon>
    </lineage>
</organism>
<dbReference type="EMBL" id="AB027020">
    <property type="protein sequence ID" value="BAA90733.1"/>
    <property type="molecule type" value="Genomic_DNA"/>
</dbReference>
<dbReference type="Proteomes" id="UP000007674">
    <property type="component" value="Genome"/>
</dbReference>
<dbReference type="GO" id="GO:0043657">
    <property type="term" value="C:host cell"/>
    <property type="evidence" value="ECO:0007669"/>
    <property type="project" value="GOC"/>
</dbReference>
<dbReference type="GO" id="GO:0044174">
    <property type="term" value="C:host cell endosome"/>
    <property type="evidence" value="ECO:0007669"/>
    <property type="project" value="UniProtKB-KW"/>
</dbReference>
<dbReference type="GO" id="GO:0044177">
    <property type="term" value="C:host cell Golgi apparatus"/>
    <property type="evidence" value="ECO:0007669"/>
    <property type="project" value="UniProtKB-SubCell"/>
</dbReference>
<dbReference type="GO" id="GO:0042025">
    <property type="term" value="C:host cell nucleus"/>
    <property type="evidence" value="ECO:0007669"/>
    <property type="project" value="UniProtKB-SubCell"/>
</dbReference>
<dbReference type="GO" id="GO:0019028">
    <property type="term" value="C:viral capsid"/>
    <property type="evidence" value="ECO:0007669"/>
    <property type="project" value="UniProtKB-UniRule"/>
</dbReference>
<dbReference type="GO" id="GO:0003677">
    <property type="term" value="F:DNA binding"/>
    <property type="evidence" value="ECO:0007669"/>
    <property type="project" value="UniProtKB-UniRule"/>
</dbReference>
<dbReference type="GO" id="GO:0005198">
    <property type="term" value="F:structural molecule activity"/>
    <property type="evidence" value="ECO:0007669"/>
    <property type="project" value="UniProtKB-UniRule"/>
</dbReference>
<dbReference type="GO" id="GO:0075521">
    <property type="term" value="P:microtubule-dependent intracellular transport of viral material towards nucleus"/>
    <property type="evidence" value="ECO:0007669"/>
    <property type="project" value="UniProtKB-UniRule"/>
</dbReference>
<dbReference type="GO" id="GO:0046718">
    <property type="term" value="P:symbiont entry into host cell"/>
    <property type="evidence" value="ECO:0007669"/>
    <property type="project" value="UniProtKB-KW"/>
</dbReference>
<dbReference type="GO" id="GO:0075732">
    <property type="term" value="P:viral penetration into host nucleus"/>
    <property type="evidence" value="ECO:0007669"/>
    <property type="project" value="UniProtKB-KW"/>
</dbReference>
<dbReference type="HAMAP" id="MF_04003">
    <property type="entry name" value="PPV_L2"/>
    <property type="match status" value="1"/>
</dbReference>
<dbReference type="InterPro" id="IPR000784">
    <property type="entry name" value="Late_L2"/>
</dbReference>
<dbReference type="Pfam" id="PF00513">
    <property type="entry name" value="Late_protein_L2"/>
    <property type="match status" value="1"/>
</dbReference>
<name>VL2_HPV69</name>
<keyword id="KW-0167">Capsid protein</keyword>
<keyword id="KW-1176">Cytoplasmic inwards viral transport</keyword>
<keyword id="KW-1015">Disulfide bond</keyword>
<keyword id="KW-0238">DNA-binding</keyword>
<keyword id="KW-1039">Host endosome</keyword>
<keyword id="KW-1040">Host Golgi apparatus</keyword>
<keyword id="KW-1048">Host nucleus</keyword>
<keyword id="KW-0945">Host-virus interaction</keyword>
<keyword id="KW-0426">Late protein</keyword>
<keyword id="KW-1177">Microtubular inwards viral transport</keyword>
<keyword id="KW-0597">Phosphoprotein</keyword>
<keyword id="KW-1163">Viral penetration into host nucleus</keyword>
<keyword id="KW-0946">Virion</keyword>
<keyword id="KW-1160">Virus entry into host cell</keyword>
<organismHost>
    <name type="scientific">Homo sapiens</name>
    <name type="common">Human</name>
    <dbReference type="NCBI Taxonomy" id="9606"/>
</organismHost>